<protein>
    <recommendedName>
        <fullName evidence="1">Serine--tRNA ligase</fullName>
        <ecNumber evidence="1">6.1.1.11</ecNumber>
    </recommendedName>
    <alternativeName>
        <fullName evidence="1">Seryl-tRNA synthetase</fullName>
        <shortName evidence="1">SerRS</shortName>
    </alternativeName>
    <alternativeName>
        <fullName evidence="1">Seryl-tRNA(Ser/Sec) synthetase</fullName>
    </alternativeName>
</protein>
<dbReference type="EC" id="6.1.1.11" evidence="1"/>
<dbReference type="EMBL" id="CP000447">
    <property type="protein sequence ID" value="ABI71649.1"/>
    <property type="molecule type" value="Genomic_DNA"/>
</dbReference>
<dbReference type="RefSeq" id="WP_011637265.1">
    <property type="nucleotide sequence ID" value="NC_008345.1"/>
</dbReference>
<dbReference type="SMR" id="Q083B6"/>
<dbReference type="STRING" id="318167.Sfri_1799"/>
<dbReference type="KEGG" id="sfr:Sfri_1799"/>
<dbReference type="eggNOG" id="COG0172">
    <property type="taxonomic scope" value="Bacteria"/>
</dbReference>
<dbReference type="HOGENOM" id="CLU_023797_1_1_6"/>
<dbReference type="OrthoDB" id="9804647at2"/>
<dbReference type="UniPathway" id="UPA00906">
    <property type="reaction ID" value="UER00895"/>
</dbReference>
<dbReference type="Proteomes" id="UP000000684">
    <property type="component" value="Chromosome"/>
</dbReference>
<dbReference type="GO" id="GO:0005737">
    <property type="term" value="C:cytoplasm"/>
    <property type="evidence" value="ECO:0007669"/>
    <property type="project" value="UniProtKB-SubCell"/>
</dbReference>
<dbReference type="GO" id="GO:0005524">
    <property type="term" value="F:ATP binding"/>
    <property type="evidence" value="ECO:0007669"/>
    <property type="project" value="UniProtKB-UniRule"/>
</dbReference>
<dbReference type="GO" id="GO:0004828">
    <property type="term" value="F:serine-tRNA ligase activity"/>
    <property type="evidence" value="ECO:0007669"/>
    <property type="project" value="UniProtKB-UniRule"/>
</dbReference>
<dbReference type="GO" id="GO:0016260">
    <property type="term" value="P:selenocysteine biosynthetic process"/>
    <property type="evidence" value="ECO:0007669"/>
    <property type="project" value="UniProtKB-UniRule"/>
</dbReference>
<dbReference type="GO" id="GO:0006434">
    <property type="term" value="P:seryl-tRNA aminoacylation"/>
    <property type="evidence" value="ECO:0007669"/>
    <property type="project" value="UniProtKB-UniRule"/>
</dbReference>
<dbReference type="CDD" id="cd00770">
    <property type="entry name" value="SerRS_core"/>
    <property type="match status" value="1"/>
</dbReference>
<dbReference type="Gene3D" id="3.30.930.10">
    <property type="entry name" value="Bira Bifunctional Protein, Domain 2"/>
    <property type="match status" value="1"/>
</dbReference>
<dbReference type="Gene3D" id="1.10.287.40">
    <property type="entry name" value="Serine-tRNA synthetase, tRNA binding domain"/>
    <property type="match status" value="1"/>
</dbReference>
<dbReference type="HAMAP" id="MF_00176">
    <property type="entry name" value="Ser_tRNA_synth_type1"/>
    <property type="match status" value="1"/>
</dbReference>
<dbReference type="InterPro" id="IPR002314">
    <property type="entry name" value="aa-tRNA-synt_IIb"/>
</dbReference>
<dbReference type="InterPro" id="IPR006195">
    <property type="entry name" value="aa-tRNA-synth_II"/>
</dbReference>
<dbReference type="InterPro" id="IPR045864">
    <property type="entry name" value="aa-tRNA-synth_II/BPL/LPL"/>
</dbReference>
<dbReference type="InterPro" id="IPR002317">
    <property type="entry name" value="Ser-tRNA-ligase_type_1"/>
</dbReference>
<dbReference type="InterPro" id="IPR015866">
    <property type="entry name" value="Ser-tRNA-synth_1_N"/>
</dbReference>
<dbReference type="InterPro" id="IPR042103">
    <property type="entry name" value="SerRS_1_N_sf"/>
</dbReference>
<dbReference type="InterPro" id="IPR033729">
    <property type="entry name" value="SerRS_core"/>
</dbReference>
<dbReference type="InterPro" id="IPR010978">
    <property type="entry name" value="tRNA-bd_arm"/>
</dbReference>
<dbReference type="NCBIfam" id="TIGR00414">
    <property type="entry name" value="serS"/>
    <property type="match status" value="1"/>
</dbReference>
<dbReference type="PANTHER" id="PTHR43697:SF1">
    <property type="entry name" value="SERINE--TRNA LIGASE"/>
    <property type="match status" value="1"/>
</dbReference>
<dbReference type="PANTHER" id="PTHR43697">
    <property type="entry name" value="SERYL-TRNA SYNTHETASE"/>
    <property type="match status" value="1"/>
</dbReference>
<dbReference type="Pfam" id="PF02403">
    <property type="entry name" value="Seryl_tRNA_N"/>
    <property type="match status" value="1"/>
</dbReference>
<dbReference type="Pfam" id="PF00587">
    <property type="entry name" value="tRNA-synt_2b"/>
    <property type="match status" value="1"/>
</dbReference>
<dbReference type="PIRSF" id="PIRSF001529">
    <property type="entry name" value="Ser-tRNA-synth_IIa"/>
    <property type="match status" value="1"/>
</dbReference>
<dbReference type="PRINTS" id="PR00981">
    <property type="entry name" value="TRNASYNTHSER"/>
</dbReference>
<dbReference type="SUPFAM" id="SSF55681">
    <property type="entry name" value="Class II aaRS and biotin synthetases"/>
    <property type="match status" value="1"/>
</dbReference>
<dbReference type="SUPFAM" id="SSF46589">
    <property type="entry name" value="tRNA-binding arm"/>
    <property type="match status" value="1"/>
</dbReference>
<dbReference type="PROSITE" id="PS50862">
    <property type="entry name" value="AA_TRNA_LIGASE_II"/>
    <property type="match status" value="1"/>
</dbReference>
<feature type="chain" id="PRO_1000019812" description="Serine--tRNA ligase">
    <location>
        <begin position="1"/>
        <end position="428"/>
    </location>
</feature>
<feature type="binding site" evidence="1">
    <location>
        <begin position="235"/>
        <end position="237"/>
    </location>
    <ligand>
        <name>L-serine</name>
        <dbReference type="ChEBI" id="CHEBI:33384"/>
    </ligand>
</feature>
<feature type="binding site" evidence="1">
    <location>
        <begin position="266"/>
        <end position="268"/>
    </location>
    <ligand>
        <name>ATP</name>
        <dbReference type="ChEBI" id="CHEBI:30616"/>
    </ligand>
</feature>
<feature type="binding site" evidence="1">
    <location>
        <position position="289"/>
    </location>
    <ligand>
        <name>L-serine</name>
        <dbReference type="ChEBI" id="CHEBI:33384"/>
    </ligand>
</feature>
<feature type="binding site" evidence="1">
    <location>
        <begin position="353"/>
        <end position="356"/>
    </location>
    <ligand>
        <name>ATP</name>
        <dbReference type="ChEBI" id="CHEBI:30616"/>
    </ligand>
</feature>
<feature type="binding site" evidence="1">
    <location>
        <position position="389"/>
    </location>
    <ligand>
        <name>L-serine</name>
        <dbReference type="ChEBI" id="CHEBI:33384"/>
    </ligand>
</feature>
<proteinExistence type="inferred from homology"/>
<evidence type="ECO:0000255" key="1">
    <source>
        <dbReference type="HAMAP-Rule" id="MF_00176"/>
    </source>
</evidence>
<comment type="function">
    <text evidence="1">Catalyzes the attachment of serine to tRNA(Ser). Is also able to aminoacylate tRNA(Sec) with serine, to form the misacylated tRNA L-seryl-tRNA(Sec), which will be further converted into selenocysteinyl-tRNA(Sec).</text>
</comment>
<comment type="catalytic activity">
    <reaction evidence="1">
        <text>tRNA(Ser) + L-serine + ATP = L-seryl-tRNA(Ser) + AMP + diphosphate + H(+)</text>
        <dbReference type="Rhea" id="RHEA:12292"/>
        <dbReference type="Rhea" id="RHEA-COMP:9669"/>
        <dbReference type="Rhea" id="RHEA-COMP:9703"/>
        <dbReference type="ChEBI" id="CHEBI:15378"/>
        <dbReference type="ChEBI" id="CHEBI:30616"/>
        <dbReference type="ChEBI" id="CHEBI:33019"/>
        <dbReference type="ChEBI" id="CHEBI:33384"/>
        <dbReference type="ChEBI" id="CHEBI:78442"/>
        <dbReference type="ChEBI" id="CHEBI:78533"/>
        <dbReference type="ChEBI" id="CHEBI:456215"/>
        <dbReference type="EC" id="6.1.1.11"/>
    </reaction>
</comment>
<comment type="catalytic activity">
    <reaction evidence="1">
        <text>tRNA(Sec) + L-serine + ATP = L-seryl-tRNA(Sec) + AMP + diphosphate + H(+)</text>
        <dbReference type="Rhea" id="RHEA:42580"/>
        <dbReference type="Rhea" id="RHEA-COMP:9742"/>
        <dbReference type="Rhea" id="RHEA-COMP:10128"/>
        <dbReference type="ChEBI" id="CHEBI:15378"/>
        <dbReference type="ChEBI" id="CHEBI:30616"/>
        <dbReference type="ChEBI" id="CHEBI:33019"/>
        <dbReference type="ChEBI" id="CHEBI:33384"/>
        <dbReference type="ChEBI" id="CHEBI:78442"/>
        <dbReference type="ChEBI" id="CHEBI:78533"/>
        <dbReference type="ChEBI" id="CHEBI:456215"/>
        <dbReference type="EC" id="6.1.1.11"/>
    </reaction>
</comment>
<comment type="pathway">
    <text evidence="1">Aminoacyl-tRNA biosynthesis; selenocysteinyl-tRNA(Sec) biosynthesis; L-seryl-tRNA(Sec) from L-serine and tRNA(Sec): step 1/1.</text>
</comment>
<comment type="subunit">
    <text evidence="1">Homodimer. The tRNA molecule binds across the dimer.</text>
</comment>
<comment type="subcellular location">
    <subcellularLocation>
        <location evidence="1">Cytoplasm</location>
    </subcellularLocation>
</comment>
<comment type="domain">
    <text evidence="1">Consists of two distinct domains, a catalytic core and a N-terminal extension that is involved in tRNA binding.</text>
</comment>
<comment type="similarity">
    <text evidence="1">Belongs to the class-II aminoacyl-tRNA synthetase family. Type-1 seryl-tRNA synthetase subfamily.</text>
</comment>
<organism>
    <name type="scientific">Shewanella frigidimarina (strain NCIMB 400)</name>
    <dbReference type="NCBI Taxonomy" id="318167"/>
    <lineage>
        <taxon>Bacteria</taxon>
        <taxon>Pseudomonadati</taxon>
        <taxon>Pseudomonadota</taxon>
        <taxon>Gammaproteobacteria</taxon>
        <taxon>Alteromonadales</taxon>
        <taxon>Shewanellaceae</taxon>
        <taxon>Shewanella</taxon>
    </lineage>
</organism>
<accession>Q083B6</accession>
<sequence>MLDPKFLRNELEITAERLATRGFILDVDNLTKLEEKRKSLQVATEDLQASRNAISKSIGQAKARGEDTSSIMAQVGDLGAQLDSKKAELAELLQQINSIAMSVPNLPDESAPVGADENDNVEVRRWGTPKVFDFEVKDHIDLGEALEGLDFKNAVKISGSRFIIMRGQIARLNRALGQFMLDLHTTEHGYTETYVPLLVNEESLLGTGQLPKFGEDLFHTKPATEEGQGLSLIPTAEVPLTNYVRDMIVDETELPMKMTALTPCFRSEAGSYGRDTRGVIRLHQFDKVELVQIAHPDHSMQALEDITSHAEKVLQLLNLPYRTMVLCTGDMGFGSSKTFDIEVWLPAQNTYREISSCSNMKDFQARRMQARYRSKADNKPALLHTLNGSGLAVGRTLVAVIENYQNQDGTITVPEALRPYMGGLSLIG</sequence>
<gene>
    <name evidence="1" type="primary">serS</name>
    <name type="ordered locus">Sfri_1799</name>
</gene>
<reference key="1">
    <citation type="submission" date="2006-08" db="EMBL/GenBank/DDBJ databases">
        <title>Complete sequence of Shewanella frigidimarina NCIMB 400.</title>
        <authorList>
            <consortium name="US DOE Joint Genome Institute"/>
            <person name="Copeland A."/>
            <person name="Lucas S."/>
            <person name="Lapidus A."/>
            <person name="Barry K."/>
            <person name="Detter J.C."/>
            <person name="Glavina del Rio T."/>
            <person name="Hammon N."/>
            <person name="Israni S."/>
            <person name="Dalin E."/>
            <person name="Tice H."/>
            <person name="Pitluck S."/>
            <person name="Fredrickson J.K."/>
            <person name="Kolker E."/>
            <person name="McCuel L.A."/>
            <person name="DiChristina T."/>
            <person name="Nealson K.H."/>
            <person name="Newman D."/>
            <person name="Tiedje J.M."/>
            <person name="Zhou J."/>
            <person name="Romine M.F."/>
            <person name="Culley D.E."/>
            <person name="Serres M."/>
            <person name="Chertkov O."/>
            <person name="Brettin T."/>
            <person name="Bruce D."/>
            <person name="Han C."/>
            <person name="Tapia R."/>
            <person name="Gilna P."/>
            <person name="Schmutz J."/>
            <person name="Larimer F."/>
            <person name="Land M."/>
            <person name="Hauser L."/>
            <person name="Kyrpides N."/>
            <person name="Mikhailova N."/>
            <person name="Richardson P."/>
        </authorList>
    </citation>
    <scope>NUCLEOTIDE SEQUENCE [LARGE SCALE GENOMIC DNA]</scope>
    <source>
        <strain>NCIMB 400</strain>
    </source>
</reference>
<keyword id="KW-0030">Aminoacyl-tRNA synthetase</keyword>
<keyword id="KW-0067">ATP-binding</keyword>
<keyword id="KW-0963">Cytoplasm</keyword>
<keyword id="KW-0436">Ligase</keyword>
<keyword id="KW-0547">Nucleotide-binding</keyword>
<keyword id="KW-0648">Protein biosynthesis</keyword>
<keyword id="KW-1185">Reference proteome</keyword>
<name>SYS_SHEFN</name>